<accession>P61321</accession>
<accession>P24208</accession>
<accession>Q46753</accession>
<gene>
    <name type="primary">lolB</name>
    <name type="synonym">hemM</name>
    <name type="ordered locus">Z1980</name>
    <name type="ordered locus">ECs1714</name>
</gene>
<comment type="function">
    <text evidence="1">Plays a critical role in the incorporation of lipoproteins in the outer membrane after they are released by the LolA protein.</text>
</comment>
<comment type="subunit">
    <text evidence="1">Monomer.</text>
</comment>
<comment type="subcellular location">
    <subcellularLocation>
        <location evidence="1">Cell outer membrane</location>
        <topology evidence="1">Lipid-anchor</topology>
    </subcellularLocation>
</comment>
<comment type="similarity">
    <text evidence="2">Belongs to the LolB family.</text>
</comment>
<organism>
    <name type="scientific">Escherichia coli O157:H7</name>
    <dbReference type="NCBI Taxonomy" id="83334"/>
    <lineage>
        <taxon>Bacteria</taxon>
        <taxon>Pseudomonadati</taxon>
        <taxon>Pseudomonadota</taxon>
        <taxon>Gammaproteobacteria</taxon>
        <taxon>Enterobacterales</taxon>
        <taxon>Enterobacteriaceae</taxon>
        <taxon>Escherichia</taxon>
    </lineage>
</organism>
<name>LOLB_ECO57</name>
<sequence>MPLPDFRLIRLLPLAALVLTACSVTTPKGPGKSPDSPQWRQHQQDVRNLNQYQTRGAFAYISDQQKVYARFFWQQTGQDRYRLLLTNPLGSTELELNAQPGNVQLVDNKGQRYTADDAEEMIGKLTGMPIPLNSLRQWILGLPGDATDYKLDDQYRLSEITYSQNGKNWKVVYGGYDTKTQPAMPANMELTDGGQRIKLKMDNWIVK</sequence>
<feature type="signal peptide" evidence="1">
    <location>
        <begin position="1"/>
        <end position="21"/>
    </location>
</feature>
<feature type="chain" id="PRO_0000018298" description="Outer-membrane lipoprotein LolB">
    <location>
        <begin position="22"/>
        <end position="207"/>
    </location>
</feature>
<feature type="lipid moiety-binding region" description="N-palmitoyl cysteine" evidence="1">
    <location>
        <position position="22"/>
    </location>
</feature>
<feature type="lipid moiety-binding region" description="S-diacylglycerol cysteine" evidence="1">
    <location>
        <position position="22"/>
    </location>
</feature>
<proteinExistence type="inferred from homology"/>
<reference key="1">
    <citation type="journal article" date="2001" name="Nature">
        <title>Genome sequence of enterohaemorrhagic Escherichia coli O157:H7.</title>
        <authorList>
            <person name="Perna N.T."/>
            <person name="Plunkett G. III"/>
            <person name="Burland V."/>
            <person name="Mau B."/>
            <person name="Glasner J.D."/>
            <person name="Rose D.J."/>
            <person name="Mayhew G.F."/>
            <person name="Evans P.S."/>
            <person name="Gregor J."/>
            <person name="Kirkpatrick H.A."/>
            <person name="Posfai G."/>
            <person name="Hackett J."/>
            <person name="Klink S."/>
            <person name="Boutin A."/>
            <person name="Shao Y."/>
            <person name="Miller L."/>
            <person name="Grotbeck E.J."/>
            <person name="Davis N.W."/>
            <person name="Lim A."/>
            <person name="Dimalanta E.T."/>
            <person name="Potamousis K."/>
            <person name="Apodaca J."/>
            <person name="Anantharaman T.S."/>
            <person name="Lin J."/>
            <person name="Yen G."/>
            <person name="Schwartz D.C."/>
            <person name="Welch R.A."/>
            <person name="Blattner F.R."/>
        </authorList>
    </citation>
    <scope>NUCLEOTIDE SEQUENCE [LARGE SCALE GENOMIC DNA]</scope>
    <source>
        <strain>O157:H7 / EDL933 / ATCC 700927 / EHEC</strain>
    </source>
</reference>
<reference key="2">
    <citation type="journal article" date="2001" name="DNA Res.">
        <title>Complete genome sequence of enterohemorrhagic Escherichia coli O157:H7 and genomic comparison with a laboratory strain K-12.</title>
        <authorList>
            <person name="Hayashi T."/>
            <person name="Makino K."/>
            <person name="Ohnishi M."/>
            <person name="Kurokawa K."/>
            <person name="Ishii K."/>
            <person name="Yokoyama K."/>
            <person name="Han C.-G."/>
            <person name="Ohtsubo E."/>
            <person name="Nakayama K."/>
            <person name="Murata T."/>
            <person name="Tanaka M."/>
            <person name="Tobe T."/>
            <person name="Iida T."/>
            <person name="Takami H."/>
            <person name="Honda T."/>
            <person name="Sasakawa C."/>
            <person name="Ogasawara N."/>
            <person name="Yasunaga T."/>
            <person name="Kuhara S."/>
            <person name="Shiba T."/>
            <person name="Hattori M."/>
            <person name="Shinagawa H."/>
        </authorList>
    </citation>
    <scope>NUCLEOTIDE SEQUENCE [LARGE SCALE GENOMIC DNA]</scope>
    <source>
        <strain>O157:H7 / Sakai / RIMD 0509952 / EHEC</strain>
    </source>
</reference>
<keyword id="KW-0998">Cell outer membrane</keyword>
<keyword id="KW-0143">Chaperone</keyword>
<keyword id="KW-0449">Lipoprotein</keyword>
<keyword id="KW-0472">Membrane</keyword>
<keyword id="KW-0564">Palmitate</keyword>
<keyword id="KW-0653">Protein transport</keyword>
<keyword id="KW-1185">Reference proteome</keyword>
<keyword id="KW-0732">Signal</keyword>
<keyword id="KW-0813">Transport</keyword>
<evidence type="ECO:0000250" key="1"/>
<evidence type="ECO:0000305" key="2"/>
<dbReference type="EMBL" id="AE005174">
    <property type="protein sequence ID" value="AAG56067.1"/>
    <property type="molecule type" value="Genomic_DNA"/>
</dbReference>
<dbReference type="EMBL" id="BA000007">
    <property type="protein sequence ID" value="BAB35137.1"/>
    <property type="molecule type" value="Genomic_DNA"/>
</dbReference>
<dbReference type="PIR" id="B90843">
    <property type="entry name" value="B90843"/>
</dbReference>
<dbReference type="PIR" id="G85700">
    <property type="entry name" value="G85700"/>
</dbReference>
<dbReference type="RefSeq" id="NP_309741.1">
    <property type="nucleotide sequence ID" value="NC_002695.1"/>
</dbReference>
<dbReference type="RefSeq" id="WP_001130692.1">
    <property type="nucleotide sequence ID" value="NZ_VOAI01000038.1"/>
</dbReference>
<dbReference type="SMR" id="P61321"/>
<dbReference type="STRING" id="155864.Z1980"/>
<dbReference type="GeneID" id="913149"/>
<dbReference type="GeneID" id="93775274"/>
<dbReference type="KEGG" id="ece:Z1980"/>
<dbReference type="KEGG" id="ecs:ECs_1714"/>
<dbReference type="PATRIC" id="fig|386585.9.peg.1812"/>
<dbReference type="eggNOG" id="COG3017">
    <property type="taxonomic scope" value="Bacteria"/>
</dbReference>
<dbReference type="HOGENOM" id="CLU_092816_1_1_6"/>
<dbReference type="OMA" id="FSSRFEW"/>
<dbReference type="Proteomes" id="UP000000558">
    <property type="component" value="Chromosome"/>
</dbReference>
<dbReference type="Proteomes" id="UP000002519">
    <property type="component" value="Chromosome"/>
</dbReference>
<dbReference type="GO" id="GO:0009279">
    <property type="term" value="C:cell outer membrane"/>
    <property type="evidence" value="ECO:0007669"/>
    <property type="project" value="UniProtKB-SubCell"/>
</dbReference>
<dbReference type="GO" id="GO:0044874">
    <property type="term" value="P:lipoprotein localization to outer membrane"/>
    <property type="evidence" value="ECO:0007669"/>
    <property type="project" value="UniProtKB-UniRule"/>
</dbReference>
<dbReference type="GO" id="GO:0015031">
    <property type="term" value="P:protein transport"/>
    <property type="evidence" value="ECO:0007669"/>
    <property type="project" value="UniProtKB-KW"/>
</dbReference>
<dbReference type="CDD" id="cd16326">
    <property type="entry name" value="LolB"/>
    <property type="match status" value="1"/>
</dbReference>
<dbReference type="FunFam" id="2.50.20.10:FF:000002">
    <property type="entry name" value="Outer-membrane lipoprotein LolB"/>
    <property type="match status" value="1"/>
</dbReference>
<dbReference type="Gene3D" id="2.50.20.10">
    <property type="entry name" value="Lipoprotein localisation LolA/LolB/LppX"/>
    <property type="match status" value="1"/>
</dbReference>
<dbReference type="HAMAP" id="MF_00233">
    <property type="entry name" value="LolB"/>
    <property type="match status" value="1"/>
</dbReference>
<dbReference type="InterPro" id="IPR029046">
    <property type="entry name" value="LolA/LolB/LppX"/>
</dbReference>
<dbReference type="InterPro" id="IPR004565">
    <property type="entry name" value="OM_lipoprot_LolB"/>
</dbReference>
<dbReference type="NCBIfam" id="TIGR00548">
    <property type="entry name" value="lolB"/>
    <property type="match status" value="1"/>
</dbReference>
<dbReference type="Pfam" id="PF03550">
    <property type="entry name" value="LolB"/>
    <property type="match status" value="1"/>
</dbReference>
<dbReference type="SUPFAM" id="SSF89392">
    <property type="entry name" value="Prokaryotic lipoproteins and lipoprotein localization factors"/>
    <property type="match status" value="1"/>
</dbReference>
<dbReference type="PROSITE" id="PS51257">
    <property type="entry name" value="PROKAR_LIPOPROTEIN"/>
    <property type="match status" value="1"/>
</dbReference>
<protein>
    <recommendedName>
        <fullName>Outer-membrane lipoprotein LolB</fullName>
    </recommendedName>
</protein>